<sequence>MEKNTAASGQLMTSSAEATPSSPKRPAGRTKFQETRHLVFRGVRWRGCAGRWVCKVRVPGSRGDRFWIGTSDTAEETARTHDAAMLALCGASASLNFADSAWLLHVPRAPVVSGLRPPAARCATRCLQGHRRVPAPGRGSTATATATSGDAASTAPPSAPVLSAKQCEFIFLSSLDCWMLMSKLISSSRAKGSLCLRKNPISFCMVTNSYTALLLEYIILQMNSMIVLIHELSKYQVFLLLTMITHHLFQWRR</sequence>
<dbReference type="EMBL" id="AF243384">
    <property type="protein sequence ID" value="AAG59619.1"/>
    <property type="molecule type" value="mRNA"/>
</dbReference>
<dbReference type="EMBL" id="AY607691">
    <property type="protein sequence ID" value="AAT37943.1"/>
    <property type="molecule type" value="mRNA"/>
</dbReference>
<dbReference type="EMBL" id="AY785895">
    <property type="protein sequence ID" value="AAX23721.1"/>
    <property type="molecule type" value="Genomic_DNA"/>
</dbReference>
<dbReference type="EMBL" id="AY345235">
    <property type="protein sequence ID" value="AAQ23985.1"/>
    <property type="molecule type" value="mRNA"/>
</dbReference>
<dbReference type="EMBL" id="AB023482">
    <property type="protein sequence ID" value="BAD67595.1"/>
    <property type="molecule type" value="Genomic_DNA"/>
</dbReference>
<dbReference type="EMBL" id="AP002536">
    <property type="protein sequence ID" value="BAD67857.1"/>
    <property type="molecule type" value="Genomic_DNA"/>
</dbReference>
<dbReference type="EMBL" id="AP008212">
    <property type="protein sequence ID" value="BAF18823.1"/>
    <property type="molecule type" value="Genomic_DNA"/>
</dbReference>
<dbReference type="EMBL" id="AP014962">
    <property type="protein sequence ID" value="BAS96326.1"/>
    <property type="molecule type" value="Genomic_DNA"/>
</dbReference>
<dbReference type="SMR" id="Q6J1A5"/>
<dbReference type="FunCoup" id="Q6J1A5">
    <property type="interactions" value="16"/>
</dbReference>
<dbReference type="PaxDb" id="39947-Q6J1A5"/>
<dbReference type="EnsemblPlants" id="Os06t0165600-01">
    <property type="protein sequence ID" value="Os06t0165600-01"/>
    <property type="gene ID" value="Os06g0165600"/>
</dbReference>
<dbReference type="Gramene" id="Os06t0165600-01">
    <property type="protein sequence ID" value="Os06t0165600-01"/>
    <property type="gene ID" value="Os06g0165600"/>
</dbReference>
<dbReference type="KEGG" id="dosa:Os06g0165600"/>
<dbReference type="HOGENOM" id="CLU_1100023_0_0_1"/>
<dbReference type="InParanoid" id="Q6J1A5"/>
<dbReference type="PlantReactome" id="R-OSA-8879007">
    <property type="pathway name" value="Response to cold temperature"/>
</dbReference>
<dbReference type="Proteomes" id="UP000000763">
    <property type="component" value="Chromosome 6"/>
</dbReference>
<dbReference type="Proteomes" id="UP000059680">
    <property type="component" value="Chromosome 6"/>
</dbReference>
<dbReference type="GO" id="GO:0005634">
    <property type="term" value="C:nucleus"/>
    <property type="evidence" value="ECO:0007669"/>
    <property type="project" value="UniProtKB-SubCell"/>
</dbReference>
<dbReference type="GO" id="GO:0003677">
    <property type="term" value="F:DNA binding"/>
    <property type="evidence" value="ECO:0007669"/>
    <property type="project" value="UniProtKB-KW"/>
</dbReference>
<dbReference type="GO" id="GO:0003700">
    <property type="term" value="F:DNA-binding transcription factor activity"/>
    <property type="evidence" value="ECO:0007669"/>
    <property type="project" value="InterPro"/>
</dbReference>
<dbReference type="CDD" id="cd00018">
    <property type="entry name" value="AP2"/>
    <property type="match status" value="1"/>
</dbReference>
<dbReference type="Gene3D" id="3.30.730.10">
    <property type="entry name" value="AP2/ERF domain"/>
    <property type="match status" value="1"/>
</dbReference>
<dbReference type="InterPro" id="IPR001471">
    <property type="entry name" value="AP2/ERF_dom"/>
</dbReference>
<dbReference type="InterPro" id="IPR036955">
    <property type="entry name" value="AP2/ERF_dom_sf"/>
</dbReference>
<dbReference type="InterPro" id="IPR016177">
    <property type="entry name" value="DNA-bd_dom_sf"/>
</dbReference>
<dbReference type="InterPro" id="IPR045277">
    <property type="entry name" value="DRE1A-I"/>
</dbReference>
<dbReference type="PANTHER" id="PTHR31839">
    <property type="entry name" value="DEHYDRATION-RESPONSIVE ELEMENT-BINDING PROTEIN 1D"/>
    <property type="match status" value="1"/>
</dbReference>
<dbReference type="PANTHER" id="PTHR31839:SF11">
    <property type="entry name" value="DEHYDRATION-RESPONSIVE ELEMENT-BINDING PROTEIN 1D"/>
    <property type="match status" value="1"/>
</dbReference>
<dbReference type="Pfam" id="PF00847">
    <property type="entry name" value="AP2"/>
    <property type="match status" value="1"/>
</dbReference>
<dbReference type="SMART" id="SM00380">
    <property type="entry name" value="AP2"/>
    <property type="match status" value="1"/>
</dbReference>
<dbReference type="SUPFAM" id="SSF54171">
    <property type="entry name" value="DNA-binding domain"/>
    <property type="match status" value="1"/>
</dbReference>
<dbReference type="PROSITE" id="PS51032">
    <property type="entry name" value="AP2_ERF"/>
    <property type="match status" value="1"/>
</dbReference>
<feature type="chain" id="PRO_0000323042" description="Dehydration-responsive element-binding protein 1D">
    <location>
        <begin position="1"/>
        <end position="253"/>
    </location>
</feature>
<feature type="DNA-binding region" description="AP2/ERF" evidence="2">
    <location>
        <begin position="39"/>
        <end position="98"/>
    </location>
</feature>
<feature type="region of interest" description="Disordered" evidence="3">
    <location>
        <begin position="1"/>
        <end position="31"/>
    </location>
</feature>
<feature type="region of interest" description="Disordered" evidence="3">
    <location>
        <begin position="131"/>
        <end position="153"/>
    </location>
</feature>
<feature type="compositionally biased region" description="Polar residues" evidence="3">
    <location>
        <begin position="1"/>
        <end position="22"/>
    </location>
</feature>
<feature type="compositionally biased region" description="Low complexity" evidence="3">
    <location>
        <begin position="134"/>
        <end position="153"/>
    </location>
</feature>
<reference key="1">
    <citation type="journal article" date="2002" name="Plant Physiol.">
        <title>Barley Cbf3 gene identification, expression pattern, and map location.</title>
        <authorList>
            <person name="Choi D.-W."/>
            <person name="Rodriguez E.M."/>
            <person name="Close T.J."/>
        </authorList>
    </citation>
    <scope>NUCLEOTIDE SEQUENCE [MRNA]</scope>
    <source>
        <strain>cv. Somegawa</strain>
    </source>
</reference>
<reference key="2">
    <citation type="journal article" date="2005" name="Gene">
        <title>The OsLti6 genes encoding low-molecular-weight membrane proteins are differentially expressed in rice cultivars with contrasting sensitivity to low temperature.</title>
        <authorList>
            <person name="Morsy M.R."/>
            <person name="Almutairi A.M."/>
            <person name="Gibbons J."/>
            <person name="Yun S.J."/>
            <person name="De Los Reyes B.G."/>
        </authorList>
    </citation>
    <scope>NUCLEOTIDE SEQUENCE [MRNA]</scope>
    <scope>INDUCTION BY COLD</scope>
    <source>
        <strain>cv. CT6748-8-CA-17</strain>
    </source>
</reference>
<reference key="3">
    <citation type="journal article" date="2005" name="Plant Mol. Biol.">
        <title>Structural, functional, and phylogenetic characterization of a large CBF gene family in barley.</title>
        <authorList>
            <person name="Skinner J.S."/>
            <person name="von Zitzewitz J."/>
            <person name="Szuecs P."/>
            <person name="Marquez-Cedillo L."/>
            <person name="Filichkin T."/>
            <person name="Amundsen K."/>
            <person name="Stockinger E.J."/>
            <person name="Thomashow M.F."/>
            <person name="Chen T.H.H."/>
            <person name="Hayes P.M."/>
        </authorList>
    </citation>
    <scope>NUCLEOTIDE SEQUENCE [GENOMIC DNA]</scope>
    <scope>GENE FAMILY</scope>
    <source>
        <strain>cv. Nipponbare</strain>
    </source>
</reference>
<reference key="4">
    <citation type="submission" date="2003-07" db="EMBL/GenBank/DDBJ databases">
        <title>Isolation of rice DREBs, transcription factors involved in dehydration- and cold-inducible gene expression.</title>
        <authorList>
            <person name="Yao Q."/>
            <person name="Peng R."/>
            <person name="Xiong A."/>
        </authorList>
    </citation>
    <scope>NUCLEOTIDE SEQUENCE [MRNA]</scope>
</reference>
<reference key="5">
    <citation type="journal article" date="2005" name="Nature">
        <title>The map-based sequence of the rice genome.</title>
        <authorList>
            <consortium name="International rice genome sequencing project (IRGSP)"/>
        </authorList>
    </citation>
    <scope>NUCLEOTIDE SEQUENCE [LARGE SCALE GENOMIC DNA]</scope>
    <source>
        <strain>cv. Nipponbare</strain>
    </source>
</reference>
<reference key="6">
    <citation type="journal article" date="2008" name="Nucleic Acids Res.">
        <title>The rice annotation project database (RAP-DB): 2008 update.</title>
        <authorList>
            <consortium name="The rice annotation project (RAP)"/>
        </authorList>
    </citation>
    <scope>GENOME REANNOTATION</scope>
    <source>
        <strain>cv. Nipponbare</strain>
    </source>
</reference>
<reference key="7">
    <citation type="journal article" date="2013" name="Rice">
        <title>Improvement of the Oryza sativa Nipponbare reference genome using next generation sequence and optical map data.</title>
        <authorList>
            <person name="Kawahara Y."/>
            <person name="de la Bastide M."/>
            <person name="Hamilton J.P."/>
            <person name="Kanamori H."/>
            <person name="McCombie W.R."/>
            <person name="Ouyang S."/>
            <person name="Schwartz D.C."/>
            <person name="Tanaka T."/>
            <person name="Wu J."/>
            <person name="Zhou S."/>
            <person name="Childs K.L."/>
            <person name="Davidson R.M."/>
            <person name="Lin H."/>
            <person name="Quesada-Ocampo L."/>
            <person name="Vaillancourt B."/>
            <person name="Sakai H."/>
            <person name="Lee S.S."/>
            <person name="Kim J."/>
            <person name="Numa H."/>
            <person name="Itoh T."/>
            <person name="Buell C.R."/>
            <person name="Matsumoto T."/>
        </authorList>
    </citation>
    <scope>GENOME REANNOTATION</scope>
    <source>
        <strain>cv. Nipponbare</strain>
    </source>
</reference>
<reference key="8">
    <citation type="journal article" date="2003" name="Plant J.">
        <title>OsDREB genes in rice, Oryza sativa L., encode transcription activators that function in drought-, high-salt- and cold-responsive gene expression.</title>
        <authorList>
            <person name="Dubouzet J.G."/>
            <person name="Sakuma Y."/>
            <person name="Ito Y."/>
            <person name="Kasuga M."/>
            <person name="Dubouzet E.G."/>
            <person name="Miura S."/>
            <person name="Seki M."/>
            <person name="Shinozaki K."/>
            <person name="Yamaguchi-Shinozaki K."/>
        </authorList>
    </citation>
    <scope>GENE FAMILY</scope>
</reference>
<reference key="9">
    <citation type="journal article" date="2006" name="Plant Physiol.">
        <title>Genome-wide analysis of the ERF gene family in Arabidopsis and rice.</title>
        <authorList>
            <person name="Nakano T."/>
            <person name="Suzuki K."/>
            <person name="Fujimura T."/>
            <person name="Shinshi H."/>
        </authorList>
    </citation>
    <scope>GENE FAMILY</scope>
    <scope>NOMENCLATURE</scope>
</reference>
<organism>
    <name type="scientific">Oryza sativa subsp. japonica</name>
    <name type="common">Rice</name>
    <dbReference type="NCBI Taxonomy" id="39947"/>
    <lineage>
        <taxon>Eukaryota</taxon>
        <taxon>Viridiplantae</taxon>
        <taxon>Streptophyta</taxon>
        <taxon>Embryophyta</taxon>
        <taxon>Tracheophyta</taxon>
        <taxon>Spermatophyta</taxon>
        <taxon>Magnoliopsida</taxon>
        <taxon>Liliopsida</taxon>
        <taxon>Poales</taxon>
        <taxon>Poaceae</taxon>
        <taxon>BOP clade</taxon>
        <taxon>Oryzoideae</taxon>
        <taxon>Oryzeae</taxon>
        <taxon>Oryzinae</taxon>
        <taxon>Oryza</taxon>
        <taxon>Oryza sativa</taxon>
    </lineage>
</organism>
<proteinExistence type="evidence at transcript level"/>
<gene>
    <name type="primary">DREB1D</name>
    <name type="synonym">CBF4</name>
    <name type="synonym">ERF116</name>
    <name type="ordered locus">Os06g0165600</name>
    <name type="ordered locus">LOC_Os06g06970</name>
    <name type="ORF">OSJNBa0015I14.27</name>
    <name type="ORF">P0680A03.1</name>
</gene>
<accession>Q6J1A5</accession>
<accession>A0A0P0WTF3</accession>
<accession>Q9AXT7</accession>
<protein>
    <recommendedName>
        <fullName>Dehydration-responsive element-binding protein 1D</fullName>
        <shortName>Protein DREB1D</shortName>
    </recommendedName>
    <alternativeName>
        <fullName>Protein C-repeat-binding factor 4</fullName>
    </alternativeName>
</protein>
<evidence type="ECO:0000250" key="1"/>
<evidence type="ECO:0000255" key="2">
    <source>
        <dbReference type="PROSITE-ProRule" id="PRU00366"/>
    </source>
</evidence>
<evidence type="ECO:0000256" key="3">
    <source>
        <dbReference type="SAM" id="MobiDB-lite"/>
    </source>
</evidence>
<evidence type="ECO:0000269" key="4">
    <source>
    </source>
</evidence>
<evidence type="ECO:0000305" key="5"/>
<keyword id="KW-0010">Activator</keyword>
<keyword id="KW-0238">DNA-binding</keyword>
<keyword id="KW-0539">Nucleus</keyword>
<keyword id="KW-1185">Reference proteome</keyword>
<keyword id="KW-0346">Stress response</keyword>
<keyword id="KW-0804">Transcription</keyword>
<keyword id="KW-0805">Transcription regulation</keyword>
<name>DRE1D_ORYSJ</name>
<comment type="function">
    <text evidence="1">Transcriptional activator that binds specifically to the DNA sequence 5'-[AG]CCGAC-3'. Binding to the C-repeat/DRE element mediates high salinity- and dehydration-inducible transcription (By similarity).</text>
</comment>
<comment type="subcellular location">
    <subcellularLocation>
        <location evidence="5">Nucleus</location>
    </subcellularLocation>
</comment>
<comment type="induction">
    <text evidence="4">By cold stress.</text>
</comment>
<comment type="similarity">
    <text evidence="5">Belongs to the AP2/ERF transcription factor family. ERF subfamily.</text>
</comment>